<name>RIP2_PHYDI</name>
<proteinExistence type="evidence at protein level"/>
<accession>P34967</accession>
<evidence type="ECO:0000250" key="1"/>
<evidence type="ECO:0000269" key="2">
    <source>
    </source>
</evidence>
<evidence type="ECO:0000305" key="3"/>
<comment type="function">
    <text>Inhibits protein synthesis in animal cells. Useful as immunotoxin for pharmacological applications.</text>
</comment>
<comment type="catalytic activity">
    <reaction>
        <text>Endohydrolysis of the N-glycosidic bond at one specific adenosine on the 28S rRNA.</text>
        <dbReference type="EC" id="3.2.2.22"/>
    </reaction>
</comment>
<comment type="tissue specificity">
    <text>Seeds.</text>
</comment>
<comment type="PTM">
    <text evidence="2">Glycosylated.</text>
</comment>
<comment type="similarity">
    <text evidence="3">Belongs to the ribosome-inactivating protein family. Type 1 RIP subfamily.</text>
</comment>
<dbReference type="EC" id="3.2.2.22"/>
<dbReference type="PIR" id="S38528">
    <property type="entry name" value="S38528"/>
</dbReference>
<dbReference type="SMR" id="P34967"/>
<dbReference type="iPTMnet" id="P34967"/>
<dbReference type="GO" id="GO:0030598">
    <property type="term" value="F:rRNA N-glycosylase activity"/>
    <property type="evidence" value="ECO:0007669"/>
    <property type="project" value="UniProtKB-EC"/>
</dbReference>
<dbReference type="GO" id="GO:0090729">
    <property type="term" value="F:toxin activity"/>
    <property type="evidence" value="ECO:0007669"/>
    <property type="project" value="UniProtKB-KW"/>
</dbReference>
<dbReference type="GO" id="GO:0006952">
    <property type="term" value="P:defense response"/>
    <property type="evidence" value="ECO:0007669"/>
    <property type="project" value="UniProtKB-KW"/>
</dbReference>
<dbReference type="GO" id="GO:0017148">
    <property type="term" value="P:negative regulation of translation"/>
    <property type="evidence" value="ECO:0007669"/>
    <property type="project" value="UniProtKB-KW"/>
</dbReference>
<dbReference type="FunFam" id="4.10.470.10:FF:000002">
    <property type="entry name" value="Antiviral protein I"/>
    <property type="match status" value="1"/>
</dbReference>
<dbReference type="FunFam" id="3.40.420.10:FF:000001">
    <property type="entry name" value="Ricin"/>
    <property type="match status" value="1"/>
</dbReference>
<dbReference type="Gene3D" id="3.40.420.10">
    <property type="entry name" value="Ricin (A subunit), domain 1"/>
    <property type="match status" value="1"/>
</dbReference>
<dbReference type="Gene3D" id="4.10.470.10">
    <property type="entry name" value="Ricin (A Subunit), domain 2"/>
    <property type="match status" value="1"/>
</dbReference>
<dbReference type="InterPro" id="IPR036041">
    <property type="entry name" value="Ribosome-inact_prot_sf"/>
</dbReference>
<dbReference type="InterPro" id="IPR017989">
    <property type="entry name" value="Ribosome_inactivat_1/2"/>
</dbReference>
<dbReference type="InterPro" id="IPR001574">
    <property type="entry name" value="Ribosome_inactivat_prot"/>
</dbReference>
<dbReference type="InterPro" id="IPR017988">
    <property type="entry name" value="Ribosome_inactivat_prot_CS"/>
</dbReference>
<dbReference type="InterPro" id="IPR016138">
    <property type="entry name" value="Ribosome_inactivat_prot_sub1"/>
</dbReference>
<dbReference type="InterPro" id="IPR016139">
    <property type="entry name" value="Ribosome_inactivat_prot_sub2"/>
</dbReference>
<dbReference type="PANTHER" id="PTHR33453">
    <property type="match status" value="1"/>
</dbReference>
<dbReference type="PANTHER" id="PTHR33453:SF34">
    <property type="entry name" value="RIBOSOME-INACTIVATING PROTEIN"/>
    <property type="match status" value="1"/>
</dbReference>
<dbReference type="Pfam" id="PF00161">
    <property type="entry name" value="RIP"/>
    <property type="match status" value="1"/>
</dbReference>
<dbReference type="PRINTS" id="PR00396">
    <property type="entry name" value="SHIGARICIN"/>
</dbReference>
<dbReference type="SUPFAM" id="SSF56371">
    <property type="entry name" value="Ribosome inactivating proteins (RIP)"/>
    <property type="match status" value="1"/>
</dbReference>
<dbReference type="PROSITE" id="PS00275">
    <property type="entry name" value="SHIGA_RICIN"/>
    <property type="match status" value="1"/>
</dbReference>
<sequence>VSTITFDVGSATISKYTTFLESLRNQAKDPSLKCYGIPMLPNTNPNPKYLLVELNAKLSSGEVKSITLMLRRHNLYVMGYSDPYDNKCRYHIFKDISSTTERKDVETTLCPNASSRVSKNISYDSSYPALENKAGRSRSQVQLGIQILNSDIGKISGVKSFTDKTEAEFLLVAIQMVSEATRFKYIENQVKTNFNRAFYPNAKVLNLEETWGKISMAIHGAKNGAFSKPLELQNADGSKWIVLRVDEIKPDVALLKYVSGSCQAT</sequence>
<reference key="1">
    <citation type="journal article" date="1997" name="Biochim. Biophys. Acta">
        <title>Complete amino-acid sequence of PD-S2, a new ribosome-inactivating protein from seeds of Phytolacca dioica L.</title>
        <authorList>
            <person name="Del Vecchio Blanco F."/>
            <person name="Bolognesi A."/>
            <person name="Malorni A."/>
            <person name="Sande M.J.W."/>
            <person name="Savino G."/>
            <person name="Parente A."/>
        </authorList>
    </citation>
    <scope>PROTEIN SEQUENCE</scope>
    <scope>GLYCOSYLATION AT ASN-120</scope>
    <source>
        <tissue>Seed</tissue>
    </source>
</reference>
<reference key="2">
    <citation type="journal article" date="1993" name="Biochim. Biophys. Acta">
        <title>Purification and partial characterization of single-chain ribosome-inactivating proteins from the seeds of Phytolacca dioica L.</title>
        <authorList>
            <person name="Parente A."/>
            <person name="de Luca P."/>
            <person name="Bolognesi A."/>
            <person name="Barbieri L."/>
            <person name="Battelli M.G."/>
            <person name="Abbondanza A."/>
            <person name="Sande M.J.W."/>
            <person name="Gigliano G.S."/>
            <person name="Tazzari P.L."/>
            <person name="Stirpe F."/>
        </authorList>
    </citation>
    <scope>PROTEIN SEQUENCE OF 1-32</scope>
    <source>
        <tissue>Seed</tissue>
    </source>
</reference>
<keyword id="KW-0903">Direct protein sequencing</keyword>
<keyword id="KW-1015">Disulfide bond</keyword>
<keyword id="KW-0325">Glycoprotein</keyword>
<keyword id="KW-0378">Hydrolase</keyword>
<keyword id="KW-0611">Plant defense</keyword>
<keyword id="KW-0652">Protein synthesis inhibitor</keyword>
<keyword id="KW-0800">Toxin</keyword>
<feature type="chain" id="PRO_0000221406" description="Protein synthesis inhibitor PD-S2">
    <location>
        <begin position="1"/>
        <end position="265"/>
    </location>
</feature>
<feature type="glycosylation site" description="N-linked (GlcNAc...) asparagine" evidence="2">
    <location>
        <position position="120"/>
    </location>
</feature>
<feature type="disulfide bond" evidence="1">
    <location>
        <begin position="34"/>
        <end position="262"/>
    </location>
</feature>
<feature type="disulfide bond" evidence="1">
    <location>
        <begin position="88"/>
        <end position="110"/>
    </location>
</feature>
<organism>
    <name type="scientific">Phytolacca dioica</name>
    <name type="common">Bella sombra tree</name>
    <name type="synonym">Phytolacca arborea</name>
    <dbReference type="NCBI Taxonomy" id="29725"/>
    <lineage>
        <taxon>Eukaryota</taxon>
        <taxon>Viridiplantae</taxon>
        <taxon>Streptophyta</taxon>
        <taxon>Embryophyta</taxon>
        <taxon>Tracheophyta</taxon>
        <taxon>Spermatophyta</taxon>
        <taxon>Magnoliopsida</taxon>
        <taxon>eudicotyledons</taxon>
        <taxon>Gunneridae</taxon>
        <taxon>Pentapetalae</taxon>
        <taxon>Caryophyllales</taxon>
        <taxon>Phytolaccaceae</taxon>
        <taxon>Phytolacca</taxon>
    </lineage>
</organism>
<protein>
    <recommendedName>
        <fullName>Protein synthesis inhibitor PD-S2</fullName>
        <ecNumber>3.2.2.22</ecNumber>
    </recommendedName>
    <alternativeName>
        <fullName>Ribosome-inactivating protein PD-S2</fullName>
    </alternativeName>
    <alternativeName>
        <fullName>rRNA N-glycosidase</fullName>
    </alternativeName>
</protein>